<feature type="chain" id="PRO_1000216135" description="tRNA-cytidine(32) 2-sulfurtransferase">
    <location>
        <begin position="1"/>
        <end position="302"/>
    </location>
</feature>
<feature type="short sequence motif" description="PP-loop motif" evidence="1">
    <location>
        <begin position="44"/>
        <end position="49"/>
    </location>
</feature>
<feature type="binding site" evidence="1">
    <location>
        <position position="119"/>
    </location>
    <ligand>
        <name>[4Fe-4S] cluster</name>
        <dbReference type="ChEBI" id="CHEBI:49883"/>
    </ligand>
</feature>
<feature type="binding site" evidence="1">
    <location>
        <position position="122"/>
    </location>
    <ligand>
        <name>[4Fe-4S] cluster</name>
        <dbReference type="ChEBI" id="CHEBI:49883"/>
    </ligand>
</feature>
<feature type="binding site" evidence="1">
    <location>
        <position position="210"/>
    </location>
    <ligand>
        <name>[4Fe-4S] cluster</name>
        <dbReference type="ChEBI" id="CHEBI:49883"/>
    </ligand>
</feature>
<accession>C4L8F7</accession>
<protein>
    <recommendedName>
        <fullName evidence="1">tRNA-cytidine(32) 2-sulfurtransferase</fullName>
        <ecNumber evidence="1">2.8.1.-</ecNumber>
    </recommendedName>
    <alternativeName>
        <fullName evidence="1">Two-thiocytidine biosynthesis protein A</fullName>
    </alternativeName>
    <alternativeName>
        <fullName evidence="1">tRNA 2-thiocytidine biosynthesis protein TtcA</fullName>
    </alternativeName>
</protein>
<reference key="1">
    <citation type="submission" date="2009-05" db="EMBL/GenBank/DDBJ databases">
        <title>Complete sequence of Tolumonas auensis DSM 9187.</title>
        <authorList>
            <consortium name="US DOE Joint Genome Institute"/>
            <person name="Lucas S."/>
            <person name="Copeland A."/>
            <person name="Lapidus A."/>
            <person name="Glavina del Rio T."/>
            <person name="Tice H."/>
            <person name="Bruce D."/>
            <person name="Goodwin L."/>
            <person name="Pitluck S."/>
            <person name="Chertkov O."/>
            <person name="Brettin T."/>
            <person name="Detter J.C."/>
            <person name="Han C."/>
            <person name="Larimer F."/>
            <person name="Land M."/>
            <person name="Hauser L."/>
            <person name="Kyrpides N."/>
            <person name="Mikhailova N."/>
            <person name="Spring S."/>
            <person name="Beller H."/>
        </authorList>
    </citation>
    <scope>NUCLEOTIDE SEQUENCE [LARGE SCALE GENOMIC DNA]</scope>
    <source>
        <strain>DSM 9187 / NBRC 110442 / TA 4</strain>
    </source>
</reference>
<proteinExistence type="inferred from homology"/>
<dbReference type="EC" id="2.8.1.-" evidence="1"/>
<dbReference type="EMBL" id="CP001616">
    <property type="protein sequence ID" value="ACQ93803.1"/>
    <property type="molecule type" value="Genomic_DNA"/>
</dbReference>
<dbReference type="RefSeq" id="WP_015879271.1">
    <property type="nucleotide sequence ID" value="NC_012691.1"/>
</dbReference>
<dbReference type="SMR" id="C4L8F7"/>
<dbReference type="STRING" id="595494.Tola_2204"/>
<dbReference type="KEGG" id="tau:Tola_2204"/>
<dbReference type="eggNOG" id="COG0037">
    <property type="taxonomic scope" value="Bacteria"/>
</dbReference>
<dbReference type="HOGENOM" id="CLU_026481_0_0_6"/>
<dbReference type="OrthoDB" id="9801054at2"/>
<dbReference type="Proteomes" id="UP000009073">
    <property type="component" value="Chromosome"/>
</dbReference>
<dbReference type="GO" id="GO:0005737">
    <property type="term" value="C:cytoplasm"/>
    <property type="evidence" value="ECO:0007669"/>
    <property type="project" value="UniProtKB-SubCell"/>
</dbReference>
<dbReference type="GO" id="GO:0051539">
    <property type="term" value="F:4 iron, 4 sulfur cluster binding"/>
    <property type="evidence" value="ECO:0007669"/>
    <property type="project" value="UniProtKB-UniRule"/>
</dbReference>
<dbReference type="GO" id="GO:0005524">
    <property type="term" value="F:ATP binding"/>
    <property type="evidence" value="ECO:0007669"/>
    <property type="project" value="UniProtKB-UniRule"/>
</dbReference>
<dbReference type="GO" id="GO:0000287">
    <property type="term" value="F:magnesium ion binding"/>
    <property type="evidence" value="ECO:0007669"/>
    <property type="project" value="UniProtKB-UniRule"/>
</dbReference>
<dbReference type="GO" id="GO:0016783">
    <property type="term" value="F:sulfurtransferase activity"/>
    <property type="evidence" value="ECO:0007669"/>
    <property type="project" value="UniProtKB-UniRule"/>
</dbReference>
<dbReference type="GO" id="GO:0000049">
    <property type="term" value="F:tRNA binding"/>
    <property type="evidence" value="ECO:0007669"/>
    <property type="project" value="UniProtKB-KW"/>
</dbReference>
<dbReference type="GO" id="GO:0034227">
    <property type="term" value="P:tRNA thio-modification"/>
    <property type="evidence" value="ECO:0007669"/>
    <property type="project" value="UniProtKB-UniRule"/>
</dbReference>
<dbReference type="CDD" id="cd24138">
    <property type="entry name" value="TtcA-like"/>
    <property type="match status" value="1"/>
</dbReference>
<dbReference type="Gene3D" id="3.40.50.620">
    <property type="entry name" value="HUPs"/>
    <property type="match status" value="1"/>
</dbReference>
<dbReference type="HAMAP" id="MF_01850">
    <property type="entry name" value="TtcA"/>
    <property type="match status" value="1"/>
</dbReference>
<dbReference type="InterPro" id="IPR014729">
    <property type="entry name" value="Rossmann-like_a/b/a_fold"/>
</dbReference>
<dbReference type="InterPro" id="IPR011063">
    <property type="entry name" value="TilS/TtcA_N"/>
</dbReference>
<dbReference type="InterPro" id="IPR012089">
    <property type="entry name" value="tRNA_Cyd_32_2_STrfase"/>
</dbReference>
<dbReference type="InterPro" id="IPR035107">
    <property type="entry name" value="tRNA_thiolation_TtcA_Ctu1"/>
</dbReference>
<dbReference type="NCBIfam" id="NF007972">
    <property type="entry name" value="PRK10696.1"/>
    <property type="match status" value="1"/>
</dbReference>
<dbReference type="PANTHER" id="PTHR43686:SF1">
    <property type="entry name" value="AMINOTRAN_5 DOMAIN-CONTAINING PROTEIN"/>
    <property type="match status" value="1"/>
</dbReference>
<dbReference type="PANTHER" id="PTHR43686">
    <property type="entry name" value="SULFURTRANSFERASE-RELATED"/>
    <property type="match status" value="1"/>
</dbReference>
<dbReference type="Pfam" id="PF01171">
    <property type="entry name" value="ATP_bind_3"/>
    <property type="match status" value="1"/>
</dbReference>
<dbReference type="PIRSF" id="PIRSF004976">
    <property type="entry name" value="ATPase_YdaO"/>
    <property type="match status" value="1"/>
</dbReference>
<dbReference type="SUPFAM" id="SSF52402">
    <property type="entry name" value="Adenine nucleotide alpha hydrolases-like"/>
    <property type="match status" value="1"/>
</dbReference>
<gene>
    <name evidence="1" type="primary">ttcA</name>
    <name type="ordered locus">Tola_2204</name>
</gene>
<keyword id="KW-0004">4Fe-4S</keyword>
<keyword id="KW-0067">ATP-binding</keyword>
<keyword id="KW-0963">Cytoplasm</keyword>
<keyword id="KW-0408">Iron</keyword>
<keyword id="KW-0411">Iron-sulfur</keyword>
<keyword id="KW-0460">Magnesium</keyword>
<keyword id="KW-0479">Metal-binding</keyword>
<keyword id="KW-0547">Nucleotide-binding</keyword>
<keyword id="KW-1185">Reference proteome</keyword>
<keyword id="KW-0694">RNA-binding</keyword>
<keyword id="KW-0808">Transferase</keyword>
<keyword id="KW-0819">tRNA processing</keyword>
<keyword id="KW-0820">tRNA-binding</keyword>
<sequence>MQDLSAKQQYNNNKLQKRLRRHIGQAIADFNMIEEGDRVMVCLSGGKDSFAMLDILRNLQASAPINFDIVAVNLDQKQPGFPPEVLPQYLDSIGVEYKIVEEDTYSIVKEKIPEGKTTCSLCSRLRRGILYRTASELGATKIALGHHRDDILETLMLNMFYAGKLKAMPPKLVSDDGKHVVIRPLAYCHEKDLIRYAEWKEFPIIPCNLCGSQENLQRKAMKEMLNEWDRRFPGRIETMFNAIQNITPSHLMDHKLFDFKSINSSSGVIDGGDIAFDKPDIPAVPQLMVIEPDDRVEIIELN</sequence>
<name>TTCA_TOLAT</name>
<comment type="function">
    <text evidence="1">Catalyzes the ATP-dependent 2-thiolation of cytidine in position 32 of tRNA, to form 2-thiocytidine (s(2)C32). The sulfur atoms are provided by the cysteine/cysteine desulfurase (IscS) system.</text>
</comment>
<comment type="catalytic activity">
    <reaction evidence="1">
        <text>cytidine(32) in tRNA + S-sulfanyl-L-cysteinyl-[cysteine desulfurase] + AH2 + ATP = 2-thiocytidine(32) in tRNA + L-cysteinyl-[cysteine desulfurase] + A + AMP + diphosphate + H(+)</text>
        <dbReference type="Rhea" id="RHEA:57048"/>
        <dbReference type="Rhea" id="RHEA-COMP:10288"/>
        <dbReference type="Rhea" id="RHEA-COMP:12157"/>
        <dbReference type="Rhea" id="RHEA-COMP:12158"/>
        <dbReference type="Rhea" id="RHEA-COMP:14821"/>
        <dbReference type="ChEBI" id="CHEBI:13193"/>
        <dbReference type="ChEBI" id="CHEBI:15378"/>
        <dbReference type="ChEBI" id="CHEBI:17499"/>
        <dbReference type="ChEBI" id="CHEBI:29950"/>
        <dbReference type="ChEBI" id="CHEBI:30616"/>
        <dbReference type="ChEBI" id="CHEBI:33019"/>
        <dbReference type="ChEBI" id="CHEBI:61963"/>
        <dbReference type="ChEBI" id="CHEBI:82748"/>
        <dbReference type="ChEBI" id="CHEBI:141453"/>
        <dbReference type="ChEBI" id="CHEBI:456215"/>
    </reaction>
    <physiologicalReaction direction="left-to-right" evidence="1">
        <dbReference type="Rhea" id="RHEA:57049"/>
    </physiologicalReaction>
</comment>
<comment type="cofactor">
    <cofactor evidence="1">
        <name>Mg(2+)</name>
        <dbReference type="ChEBI" id="CHEBI:18420"/>
    </cofactor>
</comment>
<comment type="cofactor">
    <cofactor evidence="1">
        <name>[4Fe-4S] cluster</name>
        <dbReference type="ChEBI" id="CHEBI:49883"/>
    </cofactor>
    <text evidence="1">Binds 1 [4Fe-4S] cluster per subunit. The cluster is chelated by three Cys residues, the fourth Fe has a free coordination site that may bind a sulfur atom transferred from the persulfide of IscS.</text>
</comment>
<comment type="pathway">
    <text evidence="1">tRNA modification.</text>
</comment>
<comment type="subunit">
    <text evidence="1">Homodimer.</text>
</comment>
<comment type="subcellular location">
    <subcellularLocation>
        <location evidence="1">Cytoplasm</location>
    </subcellularLocation>
</comment>
<comment type="miscellaneous">
    <text evidence="1">The thiolation reaction likely consists of two steps: a first activation step by ATP to form an adenylated intermediate of the target base of tRNA, and a second nucleophilic substitution step of the sulfur (S) atom supplied by the hydrosulfide attached to the Fe-S cluster.</text>
</comment>
<comment type="similarity">
    <text evidence="1">Belongs to the TtcA family.</text>
</comment>
<organism>
    <name type="scientific">Tolumonas auensis (strain DSM 9187 / NBRC 110442 / TA 4)</name>
    <dbReference type="NCBI Taxonomy" id="595494"/>
    <lineage>
        <taxon>Bacteria</taxon>
        <taxon>Pseudomonadati</taxon>
        <taxon>Pseudomonadota</taxon>
        <taxon>Gammaproteobacteria</taxon>
        <taxon>Aeromonadales</taxon>
        <taxon>Aeromonadaceae</taxon>
        <taxon>Tolumonas</taxon>
    </lineage>
</organism>
<evidence type="ECO:0000255" key="1">
    <source>
        <dbReference type="HAMAP-Rule" id="MF_01850"/>
    </source>
</evidence>